<proteinExistence type="inferred from homology"/>
<sequence length="215" mass="23315">MADKSDLNALSGRFRGYYPVVIDVETAGFNAQSDALLEIAAVTLQMNKEGWLLPDETLHFHVEPFEGANLQPEALAFNGIDPTNPLRGAVSEHDALHAIFKAVRKGIKDKGCNRAIIVAHNANFDHSFVMAAAERASLKRNPFHPFATFDTAALSGLVLGQTVLAKACLAAGIPFDSSQAHSALYDTLQTAKLFCELVNRWKKLGGWPLPTAESE</sequence>
<name>RNT_YERPS</name>
<comment type="function">
    <text evidence="1">Trims short 3' overhangs of a variety of RNA species, leaving a one or two nucleotide 3' overhang. Responsible for the end-turnover of tRNA: specifically removes the terminal AMP residue from uncharged tRNA (tRNA-C-C-A). Also appears to be involved in tRNA biosynthesis.</text>
</comment>
<comment type="cofactor">
    <cofactor evidence="1">
        <name>Mg(2+)</name>
        <dbReference type="ChEBI" id="CHEBI:18420"/>
    </cofactor>
    <text evidence="1">Binds two Mg(2+) per subunit. The active form of the enzyme binds two Mg(2+) ions in its active site. The first Mg(2+) forms only one salt bridge with the protein.</text>
</comment>
<comment type="subunit">
    <text evidence="1">Homodimer.</text>
</comment>
<comment type="similarity">
    <text evidence="1">Belongs to the RNase T family.</text>
</comment>
<accession>Q66A36</accession>
<dbReference type="EC" id="3.1.13.-" evidence="1"/>
<dbReference type="EMBL" id="BX936398">
    <property type="protein sequence ID" value="CAH21534.1"/>
    <property type="molecule type" value="Genomic_DNA"/>
</dbReference>
<dbReference type="RefSeq" id="WP_011192528.1">
    <property type="nucleotide sequence ID" value="NC_006155.1"/>
</dbReference>
<dbReference type="SMR" id="Q66A36"/>
<dbReference type="GeneID" id="49785707"/>
<dbReference type="KEGG" id="ypo:BZ17_164"/>
<dbReference type="KEGG" id="yps:YPTB2296"/>
<dbReference type="PATRIC" id="fig|273123.14.peg.171"/>
<dbReference type="Proteomes" id="UP000001011">
    <property type="component" value="Chromosome"/>
</dbReference>
<dbReference type="GO" id="GO:0005829">
    <property type="term" value="C:cytosol"/>
    <property type="evidence" value="ECO:0007669"/>
    <property type="project" value="TreeGrafter"/>
</dbReference>
<dbReference type="GO" id="GO:0008408">
    <property type="term" value="F:3'-5' exonuclease activity"/>
    <property type="evidence" value="ECO:0007669"/>
    <property type="project" value="TreeGrafter"/>
</dbReference>
<dbReference type="GO" id="GO:0000287">
    <property type="term" value="F:magnesium ion binding"/>
    <property type="evidence" value="ECO:0007669"/>
    <property type="project" value="UniProtKB-UniRule"/>
</dbReference>
<dbReference type="GO" id="GO:0003676">
    <property type="term" value="F:nucleic acid binding"/>
    <property type="evidence" value="ECO:0007669"/>
    <property type="project" value="InterPro"/>
</dbReference>
<dbReference type="GO" id="GO:0016896">
    <property type="term" value="F:RNA exonuclease activity, producing 5'-phosphomonoesters"/>
    <property type="evidence" value="ECO:0007669"/>
    <property type="project" value="UniProtKB-UniRule"/>
</dbReference>
<dbReference type="GO" id="GO:0045004">
    <property type="term" value="P:DNA replication proofreading"/>
    <property type="evidence" value="ECO:0007669"/>
    <property type="project" value="TreeGrafter"/>
</dbReference>
<dbReference type="GO" id="GO:0008033">
    <property type="term" value="P:tRNA processing"/>
    <property type="evidence" value="ECO:0007669"/>
    <property type="project" value="UniProtKB-KW"/>
</dbReference>
<dbReference type="CDD" id="cd06134">
    <property type="entry name" value="RNaseT"/>
    <property type="match status" value="1"/>
</dbReference>
<dbReference type="FunFam" id="3.30.420.10:FF:000009">
    <property type="entry name" value="Ribonuclease T"/>
    <property type="match status" value="1"/>
</dbReference>
<dbReference type="Gene3D" id="3.30.420.10">
    <property type="entry name" value="Ribonuclease H-like superfamily/Ribonuclease H"/>
    <property type="match status" value="1"/>
</dbReference>
<dbReference type="HAMAP" id="MF_00157">
    <property type="entry name" value="RNase_T"/>
    <property type="match status" value="1"/>
</dbReference>
<dbReference type="InterPro" id="IPR013520">
    <property type="entry name" value="Exonuclease_RNaseT/DNA_pol3"/>
</dbReference>
<dbReference type="InterPro" id="IPR005987">
    <property type="entry name" value="RNase_T"/>
</dbReference>
<dbReference type="InterPro" id="IPR012337">
    <property type="entry name" value="RNaseH-like_sf"/>
</dbReference>
<dbReference type="InterPro" id="IPR036397">
    <property type="entry name" value="RNaseH_sf"/>
</dbReference>
<dbReference type="NCBIfam" id="TIGR01298">
    <property type="entry name" value="RNaseT"/>
    <property type="match status" value="1"/>
</dbReference>
<dbReference type="PANTHER" id="PTHR30231">
    <property type="entry name" value="DNA POLYMERASE III SUBUNIT EPSILON"/>
    <property type="match status" value="1"/>
</dbReference>
<dbReference type="PANTHER" id="PTHR30231:SF2">
    <property type="entry name" value="RIBONUCLEASE T"/>
    <property type="match status" value="1"/>
</dbReference>
<dbReference type="Pfam" id="PF00929">
    <property type="entry name" value="RNase_T"/>
    <property type="match status" value="1"/>
</dbReference>
<dbReference type="SMART" id="SM00479">
    <property type="entry name" value="EXOIII"/>
    <property type="match status" value="1"/>
</dbReference>
<dbReference type="SUPFAM" id="SSF53098">
    <property type="entry name" value="Ribonuclease H-like"/>
    <property type="match status" value="1"/>
</dbReference>
<feature type="chain" id="PRO_1000011429" description="Ribonuclease T">
    <location>
        <begin position="1"/>
        <end position="215"/>
    </location>
</feature>
<feature type="domain" description="Exonuclease" evidence="1">
    <location>
        <begin position="20"/>
        <end position="194"/>
    </location>
</feature>
<feature type="active site" description="Proton donor/acceptor" evidence="1">
    <location>
        <position position="181"/>
    </location>
</feature>
<feature type="binding site" evidence="1">
    <location>
        <position position="23"/>
    </location>
    <ligand>
        <name>Mg(2+)</name>
        <dbReference type="ChEBI" id="CHEBI:18420"/>
        <label>1</label>
        <note>catalytic</note>
    </ligand>
</feature>
<feature type="binding site" evidence="1">
    <location>
        <position position="23"/>
    </location>
    <ligand>
        <name>Mg(2+)</name>
        <dbReference type="ChEBI" id="CHEBI:18420"/>
        <label>2</label>
        <note>catalytic</note>
    </ligand>
</feature>
<feature type="binding site" evidence="1">
    <location>
        <position position="25"/>
    </location>
    <ligand>
        <name>Mg(2+)</name>
        <dbReference type="ChEBI" id="CHEBI:18420"/>
        <label>2</label>
        <note>catalytic</note>
    </ligand>
</feature>
<feature type="binding site" evidence="1">
    <location>
        <position position="181"/>
    </location>
    <ligand>
        <name>Mg(2+)</name>
        <dbReference type="ChEBI" id="CHEBI:18420"/>
        <label>2</label>
        <note>catalytic</note>
    </ligand>
</feature>
<feature type="binding site" evidence="1">
    <location>
        <position position="186"/>
    </location>
    <ligand>
        <name>Mg(2+)</name>
        <dbReference type="ChEBI" id="CHEBI:18420"/>
        <label>2</label>
        <note>catalytic</note>
    </ligand>
</feature>
<feature type="site" description="Important for substrate binding and specificity" evidence="1">
    <location>
        <position position="29"/>
    </location>
</feature>
<feature type="site" description="Important for substrate binding and specificity" evidence="1">
    <location>
        <position position="77"/>
    </location>
</feature>
<feature type="site" description="Important for substrate binding and specificity" evidence="1">
    <location>
        <position position="124"/>
    </location>
</feature>
<feature type="site" description="Important for substrate binding and specificity" evidence="1">
    <location>
        <position position="146"/>
    </location>
</feature>
<keyword id="KW-0269">Exonuclease</keyword>
<keyword id="KW-0378">Hydrolase</keyword>
<keyword id="KW-0460">Magnesium</keyword>
<keyword id="KW-0479">Metal-binding</keyword>
<keyword id="KW-0540">Nuclease</keyword>
<keyword id="KW-0819">tRNA processing</keyword>
<organism>
    <name type="scientific">Yersinia pseudotuberculosis serotype I (strain IP32953)</name>
    <dbReference type="NCBI Taxonomy" id="273123"/>
    <lineage>
        <taxon>Bacteria</taxon>
        <taxon>Pseudomonadati</taxon>
        <taxon>Pseudomonadota</taxon>
        <taxon>Gammaproteobacteria</taxon>
        <taxon>Enterobacterales</taxon>
        <taxon>Yersiniaceae</taxon>
        <taxon>Yersinia</taxon>
    </lineage>
</organism>
<reference key="1">
    <citation type="journal article" date="2004" name="Proc. Natl. Acad. Sci. U.S.A.">
        <title>Insights into the evolution of Yersinia pestis through whole-genome comparison with Yersinia pseudotuberculosis.</title>
        <authorList>
            <person name="Chain P.S.G."/>
            <person name="Carniel E."/>
            <person name="Larimer F.W."/>
            <person name="Lamerdin J."/>
            <person name="Stoutland P.O."/>
            <person name="Regala W.M."/>
            <person name="Georgescu A.M."/>
            <person name="Vergez L.M."/>
            <person name="Land M.L."/>
            <person name="Motin V.L."/>
            <person name="Brubaker R.R."/>
            <person name="Fowler J."/>
            <person name="Hinnebusch J."/>
            <person name="Marceau M."/>
            <person name="Medigue C."/>
            <person name="Simonet M."/>
            <person name="Chenal-Francisque V."/>
            <person name="Souza B."/>
            <person name="Dacheux D."/>
            <person name="Elliott J.M."/>
            <person name="Derbise A."/>
            <person name="Hauser L.J."/>
            <person name="Garcia E."/>
        </authorList>
    </citation>
    <scope>NUCLEOTIDE SEQUENCE [LARGE SCALE GENOMIC DNA]</scope>
    <source>
        <strain>IP32953</strain>
    </source>
</reference>
<evidence type="ECO:0000255" key="1">
    <source>
        <dbReference type="HAMAP-Rule" id="MF_00157"/>
    </source>
</evidence>
<gene>
    <name evidence="1" type="primary">rnt</name>
    <name type="ordered locus">YPTB2296</name>
</gene>
<protein>
    <recommendedName>
        <fullName evidence="1">Ribonuclease T</fullName>
        <ecNumber evidence="1">3.1.13.-</ecNumber>
    </recommendedName>
    <alternativeName>
        <fullName evidence="1">Exoribonuclease T</fullName>
        <shortName evidence="1">RNase T</shortName>
    </alternativeName>
</protein>